<dbReference type="EMBL" id="CU928163">
    <property type="protein sequence ID" value="CAR13067.1"/>
    <property type="molecule type" value="Genomic_DNA"/>
</dbReference>
<dbReference type="RefSeq" id="WP_000705197.1">
    <property type="nucleotide sequence ID" value="NC_011751.1"/>
</dbReference>
<dbReference type="RefSeq" id="YP_002412601.1">
    <property type="nucleotide sequence ID" value="NC_011751.1"/>
</dbReference>
<dbReference type="STRING" id="585056.ECUMN_1868"/>
<dbReference type="KEGG" id="eum:ECUMN_1868"/>
<dbReference type="PATRIC" id="fig|585056.7.peg.2055"/>
<dbReference type="HOGENOM" id="CLU_167574_0_0_6"/>
<dbReference type="Proteomes" id="UP000007097">
    <property type="component" value="Chromosome"/>
</dbReference>
<dbReference type="HAMAP" id="MF_01581">
    <property type="entry name" value="UPF0482"/>
    <property type="match status" value="1"/>
</dbReference>
<dbReference type="InterPro" id="IPR009700">
    <property type="entry name" value="DUF1283"/>
</dbReference>
<dbReference type="NCBIfam" id="NF010180">
    <property type="entry name" value="PRK13659.1"/>
    <property type="match status" value="1"/>
</dbReference>
<dbReference type="Pfam" id="PF06932">
    <property type="entry name" value="DUF1283"/>
    <property type="match status" value="1"/>
</dbReference>
<gene>
    <name evidence="1" type="primary">ynfB</name>
    <name type="ordered locus">ECUMN_1868</name>
</gene>
<sequence length="113" mass="12943">MKITLSKRIGLLAFLLPCALALSTTVHAETNKLVIESGDSAQSRQHAAMEKEQWNDTRNLRQKVNKRTEKEWDKADAAFDNRDKCEQSANINAYWEPNTLRCLDRRTGRVITP</sequence>
<organism>
    <name type="scientific">Escherichia coli O17:K52:H18 (strain UMN026 / ExPEC)</name>
    <dbReference type="NCBI Taxonomy" id="585056"/>
    <lineage>
        <taxon>Bacteria</taxon>
        <taxon>Pseudomonadati</taxon>
        <taxon>Pseudomonadota</taxon>
        <taxon>Gammaproteobacteria</taxon>
        <taxon>Enterobacterales</taxon>
        <taxon>Enterobacteriaceae</taxon>
        <taxon>Escherichia</taxon>
    </lineage>
</organism>
<keyword id="KW-0732">Signal</keyword>
<comment type="similarity">
    <text evidence="1">Belongs to the UPF0482 family.</text>
</comment>
<evidence type="ECO:0000255" key="1">
    <source>
        <dbReference type="HAMAP-Rule" id="MF_01581"/>
    </source>
</evidence>
<proteinExistence type="inferred from homology"/>
<name>YNFB_ECOLU</name>
<protein>
    <recommendedName>
        <fullName evidence="1">UPF0482 protein YnfB</fullName>
    </recommendedName>
</protein>
<reference key="1">
    <citation type="journal article" date="2009" name="PLoS Genet.">
        <title>Organised genome dynamics in the Escherichia coli species results in highly diverse adaptive paths.</title>
        <authorList>
            <person name="Touchon M."/>
            <person name="Hoede C."/>
            <person name="Tenaillon O."/>
            <person name="Barbe V."/>
            <person name="Baeriswyl S."/>
            <person name="Bidet P."/>
            <person name="Bingen E."/>
            <person name="Bonacorsi S."/>
            <person name="Bouchier C."/>
            <person name="Bouvet O."/>
            <person name="Calteau A."/>
            <person name="Chiapello H."/>
            <person name="Clermont O."/>
            <person name="Cruveiller S."/>
            <person name="Danchin A."/>
            <person name="Diard M."/>
            <person name="Dossat C."/>
            <person name="Karoui M.E."/>
            <person name="Frapy E."/>
            <person name="Garry L."/>
            <person name="Ghigo J.M."/>
            <person name="Gilles A.M."/>
            <person name="Johnson J."/>
            <person name="Le Bouguenec C."/>
            <person name="Lescat M."/>
            <person name="Mangenot S."/>
            <person name="Martinez-Jehanne V."/>
            <person name="Matic I."/>
            <person name="Nassif X."/>
            <person name="Oztas S."/>
            <person name="Petit M.A."/>
            <person name="Pichon C."/>
            <person name="Rouy Z."/>
            <person name="Ruf C.S."/>
            <person name="Schneider D."/>
            <person name="Tourret J."/>
            <person name="Vacherie B."/>
            <person name="Vallenet D."/>
            <person name="Medigue C."/>
            <person name="Rocha E.P.C."/>
            <person name="Denamur E."/>
        </authorList>
    </citation>
    <scope>NUCLEOTIDE SEQUENCE [LARGE SCALE GENOMIC DNA]</scope>
    <source>
        <strain>UMN026 / ExPEC</strain>
    </source>
</reference>
<accession>B7NB33</accession>
<feature type="signal peptide" evidence="1">
    <location>
        <begin position="1"/>
        <end position="28"/>
    </location>
</feature>
<feature type="chain" id="PRO_1000200999" description="UPF0482 protein YnfB">
    <location>
        <begin position="29"/>
        <end position="113"/>
    </location>
</feature>